<comment type="function">
    <text evidence="1">Plays an important role in the de novo pathway of purine nucleotide biosynthesis. Catalyzes the first committed step in the biosynthesis of AMP from IMP.</text>
</comment>
<comment type="catalytic activity">
    <reaction evidence="1">
        <text>IMP + L-aspartate + GTP = N(6)-(1,2-dicarboxyethyl)-AMP + GDP + phosphate + 2 H(+)</text>
        <dbReference type="Rhea" id="RHEA:15753"/>
        <dbReference type="ChEBI" id="CHEBI:15378"/>
        <dbReference type="ChEBI" id="CHEBI:29991"/>
        <dbReference type="ChEBI" id="CHEBI:37565"/>
        <dbReference type="ChEBI" id="CHEBI:43474"/>
        <dbReference type="ChEBI" id="CHEBI:57567"/>
        <dbReference type="ChEBI" id="CHEBI:58053"/>
        <dbReference type="ChEBI" id="CHEBI:58189"/>
        <dbReference type="EC" id="6.3.4.4"/>
    </reaction>
</comment>
<comment type="cofactor">
    <cofactor evidence="1">
        <name>Mg(2+)</name>
        <dbReference type="ChEBI" id="CHEBI:18420"/>
    </cofactor>
    <text evidence="1">Binds 1 Mg(2+) ion per subunit.</text>
</comment>
<comment type="pathway">
    <text evidence="1">Purine metabolism; AMP biosynthesis via de novo pathway; AMP from IMP: step 1/2.</text>
</comment>
<comment type="subunit">
    <text evidence="1">Homodimer.</text>
</comment>
<comment type="subcellular location">
    <subcellularLocation>
        <location evidence="1">Cytoplasm</location>
    </subcellularLocation>
</comment>
<comment type="similarity">
    <text evidence="1">Belongs to the adenylosuccinate synthetase family.</text>
</comment>
<organism>
    <name type="scientific">Chlorobium limicola (strain DSM 245 / NBRC 103803 / 6330)</name>
    <dbReference type="NCBI Taxonomy" id="290315"/>
    <lineage>
        <taxon>Bacteria</taxon>
        <taxon>Pseudomonadati</taxon>
        <taxon>Chlorobiota</taxon>
        <taxon>Chlorobiia</taxon>
        <taxon>Chlorobiales</taxon>
        <taxon>Chlorobiaceae</taxon>
        <taxon>Chlorobium/Pelodictyon group</taxon>
        <taxon>Chlorobium</taxon>
    </lineage>
</organism>
<name>PURA_CHLL2</name>
<gene>
    <name evidence="1" type="primary">purA</name>
    <name type="ordered locus">Clim_2196</name>
</gene>
<accession>B3EGV7</accession>
<keyword id="KW-0963">Cytoplasm</keyword>
<keyword id="KW-0342">GTP-binding</keyword>
<keyword id="KW-0436">Ligase</keyword>
<keyword id="KW-0460">Magnesium</keyword>
<keyword id="KW-0479">Metal-binding</keyword>
<keyword id="KW-0547">Nucleotide-binding</keyword>
<keyword id="KW-0658">Purine biosynthesis</keyword>
<protein>
    <recommendedName>
        <fullName evidence="1">Adenylosuccinate synthetase</fullName>
        <shortName evidence="1">AMPSase</shortName>
        <shortName evidence="1">AdSS</shortName>
        <ecNumber evidence="1">6.3.4.4</ecNumber>
    </recommendedName>
    <alternativeName>
        <fullName evidence="1">IMP--aspartate ligase</fullName>
    </alternativeName>
</protein>
<evidence type="ECO:0000255" key="1">
    <source>
        <dbReference type="HAMAP-Rule" id="MF_00011"/>
    </source>
</evidence>
<feature type="chain" id="PRO_1000089276" description="Adenylosuccinate synthetase">
    <location>
        <begin position="1"/>
        <end position="434"/>
    </location>
</feature>
<feature type="active site" description="Proton acceptor" evidence="1">
    <location>
        <position position="23"/>
    </location>
</feature>
<feature type="active site" description="Proton donor" evidence="1">
    <location>
        <position position="51"/>
    </location>
</feature>
<feature type="binding site" evidence="1">
    <location>
        <begin position="22"/>
        <end position="28"/>
    </location>
    <ligand>
        <name>GTP</name>
        <dbReference type="ChEBI" id="CHEBI:37565"/>
    </ligand>
</feature>
<feature type="binding site" description="in other chain" evidence="1">
    <location>
        <begin position="23"/>
        <end position="26"/>
    </location>
    <ligand>
        <name>IMP</name>
        <dbReference type="ChEBI" id="CHEBI:58053"/>
        <note>ligand shared between dimeric partners</note>
    </ligand>
</feature>
<feature type="binding site" evidence="1">
    <location>
        <position position="23"/>
    </location>
    <ligand>
        <name>Mg(2+)</name>
        <dbReference type="ChEBI" id="CHEBI:18420"/>
    </ligand>
</feature>
<feature type="binding site" description="in other chain" evidence="1">
    <location>
        <begin position="48"/>
        <end position="51"/>
    </location>
    <ligand>
        <name>IMP</name>
        <dbReference type="ChEBI" id="CHEBI:58053"/>
        <note>ligand shared between dimeric partners</note>
    </ligand>
</feature>
<feature type="binding site" evidence="1">
    <location>
        <begin position="50"/>
        <end position="52"/>
    </location>
    <ligand>
        <name>GTP</name>
        <dbReference type="ChEBI" id="CHEBI:37565"/>
    </ligand>
</feature>
<feature type="binding site" evidence="1">
    <location>
        <position position="50"/>
    </location>
    <ligand>
        <name>Mg(2+)</name>
        <dbReference type="ChEBI" id="CHEBI:18420"/>
    </ligand>
</feature>
<feature type="binding site" description="in other chain" evidence="1">
    <location>
        <position position="139"/>
    </location>
    <ligand>
        <name>IMP</name>
        <dbReference type="ChEBI" id="CHEBI:58053"/>
        <note>ligand shared between dimeric partners</note>
    </ligand>
</feature>
<feature type="binding site" evidence="1">
    <location>
        <position position="153"/>
    </location>
    <ligand>
        <name>IMP</name>
        <dbReference type="ChEBI" id="CHEBI:58053"/>
        <note>ligand shared between dimeric partners</note>
    </ligand>
</feature>
<feature type="binding site" description="in other chain" evidence="1">
    <location>
        <position position="234"/>
    </location>
    <ligand>
        <name>IMP</name>
        <dbReference type="ChEBI" id="CHEBI:58053"/>
        <note>ligand shared between dimeric partners</note>
    </ligand>
</feature>
<feature type="binding site" description="in other chain" evidence="1">
    <location>
        <position position="249"/>
    </location>
    <ligand>
        <name>IMP</name>
        <dbReference type="ChEBI" id="CHEBI:58053"/>
        <note>ligand shared between dimeric partners</note>
    </ligand>
</feature>
<feature type="binding site" evidence="1">
    <location>
        <begin position="309"/>
        <end position="315"/>
    </location>
    <ligand>
        <name>substrate</name>
    </ligand>
</feature>
<feature type="binding site" description="in other chain" evidence="1">
    <location>
        <position position="313"/>
    </location>
    <ligand>
        <name>IMP</name>
        <dbReference type="ChEBI" id="CHEBI:58053"/>
        <note>ligand shared between dimeric partners</note>
    </ligand>
</feature>
<feature type="binding site" evidence="1">
    <location>
        <position position="315"/>
    </location>
    <ligand>
        <name>GTP</name>
        <dbReference type="ChEBI" id="CHEBI:37565"/>
    </ligand>
</feature>
<feature type="binding site" evidence="1">
    <location>
        <begin position="341"/>
        <end position="343"/>
    </location>
    <ligand>
        <name>GTP</name>
        <dbReference type="ChEBI" id="CHEBI:37565"/>
    </ligand>
</feature>
<feature type="binding site" evidence="1">
    <location>
        <begin position="423"/>
        <end position="425"/>
    </location>
    <ligand>
        <name>GTP</name>
        <dbReference type="ChEBI" id="CHEBI:37565"/>
    </ligand>
</feature>
<reference key="1">
    <citation type="submission" date="2008-05" db="EMBL/GenBank/DDBJ databases">
        <title>Complete sequence of Chlorobium limicola DSM 245.</title>
        <authorList>
            <consortium name="US DOE Joint Genome Institute"/>
            <person name="Lucas S."/>
            <person name="Copeland A."/>
            <person name="Lapidus A."/>
            <person name="Glavina del Rio T."/>
            <person name="Dalin E."/>
            <person name="Tice H."/>
            <person name="Bruce D."/>
            <person name="Goodwin L."/>
            <person name="Pitluck S."/>
            <person name="Schmutz J."/>
            <person name="Larimer F."/>
            <person name="Land M."/>
            <person name="Hauser L."/>
            <person name="Kyrpides N."/>
            <person name="Ovchinnikova G."/>
            <person name="Zhao F."/>
            <person name="Li T."/>
            <person name="Liu Z."/>
            <person name="Overmann J."/>
            <person name="Bryant D.A."/>
            <person name="Richardson P."/>
        </authorList>
    </citation>
    <scope>NUCLEOTIDE SEQUENCE [LARGE SCALE GENOMIC DNA]</scope>
    <source>
        <strain>DSM 245 / NBRC 103803 / 6330</strain>
    </source>
</reference>
<proteinExistence type="inferred from homology"/>
<sequence>MESKSFSKPTRTATVIVGTQFGDEGKGKLVDYLSDKYDIVVRYQGGANAGHTICFDNKSVVLHLIPSGIFHEGCVCVIGNGVVIDPVALLEEIKKVEELGYDVKGRLFISHNAHLIMPYHKRLDSLHEDAQGEQKIGTTGRGIGPSYEDKFARKGIRVVDLLSPDVLQEKLRENLAAKNKLFRNIYEKEEFDVEELVRDYSEFDKIIDPYVTNTQLYLSRQLKAGKTVLLEGAQGCLLDVDHGTYPYVTSSNPTSGGACTGSGIAPNYVGKVIGVVKAYMTRVGNGAFPSELFDETGESLCRIGHEFGATTGRKRRCGWIDLVALRYSLTVNGVTEIALTKLDVLDTFEEVKVCTSYMLDGKEIHDFPTDHPTLSRVTPVYKTLKGWMSSNAHARTLDDMCPEARSYVTFLEDELQVPVTFVSVGPGREETVYR</sequence>
<dbReference type="EC" id="6.3.4.4" evidence="1"/>
<dbReference type="EMBL" id="CP001097">
    <property type="protein sequence ID" value="ACD91220.1"/>
    <property type="molecule type" value="Genomic_DNA"/>
</dbReference>
<dbReference type="RefSeq" id="WP_012467088.1">
    <property type="nucleotide sequence ID" value="NC_010803.1"/>
</dbReference>
<dbReference type="SMR" id="B3EGV7"/>
<dbReference type="STRING" id="290315.Clim_2196"/>
<dbReference type="KEGG" id="cli:Clim_2196"/>
<dbReference type="eggNOG" id="COG0104">
    <property type="taxonomic scope" value="Bacteria"/>
</dbReference>
<dbReference type="HOGENOM" id="CLU_029848_0_0_10"/>
<dbReference type="OrthoDB" id="9807553at2"/>
<dbReference type="UniPathway" id="UPA00075">
    <property type="reaction ID" value="UER00335"/>
</dbReference>
<dbReference type="Proteomes" id="UP000008841">
    <property type="component" value="Chromosome"/>
</dbReference>
<dbReference type="GO" id="GO:0005737">
    <property type="term" value="C:cytoplasm"/>
    <property type="evidence" value="ECO:0007669"/>
    <property type="project" value="UniProtKB-SubCell"/>
</dbReference>
<dbReference type="GO" id="GO:0004019">
    <property type="term" value="F:adenylosuccinate synthase activity"/>
    <property type="evidence" value="ECO:0007669"/>
    <property type="project" value="UniProtKB-UniRule"/>
</dbReference>
<dbReference type="GO" id="GO:0005525">
    <property type="term" value="F:GTP binding"/>
    <property type="evidence" value="ECO:0007669"/>
    <property type="project" value="UniProtKB-UniRule"/>
</dbReference>
<dbReference type="GO" id="GO:0000287">
    <property type="term" value="F:magnesium ion binding"/>
    <property type="evidence" value="ECO:0007669"/>
    <property type="project" value="UniProtKB-UniRule"/>
</dbReference>
<dbReference type="GO" id="GO:0044208">
    <property type="term" value="P:'de novo' AMP biosynthetic process"/>
    <property type="evidence" value="ECO:0007669"/>
    <property type="project" value="UniProtKB-UniRule"/>
</dbReference>
<dbReference type="GO" id="GO:0046040">
    <property type="term" value="P:IMP metabolic process"/>
    <property type="evidence" value="ECO:0007669"/>
    <property type="project" value="TreeGrafter"/>
</dbReference>
<dbReference type="CDD" id="cd03108">
    <property type="entry name" value="AdSS"/>
    <property type="match status" value="1"/>
</dbReference>
<dbReference type="FunFam" id="1.10.300.10:FF:000001">
    <property type="entry name" value="Adenylosuccinate synthetase"/>
    <property type="match status" value="1"/>
</dbReference>
<dbReference type="FunFam" id="3.90.170.10:FF:000001">
    <property type="entry name" value="Adenylosuccinate synthetase"/>
    <property type="match status" value="1"/>
</dbReference>
<dbReference type="Gene3D" id="3.40.440.10">
    <property type="entry name" value="Adenylosuccinate Synthetase, subunit A, domain 1"/>
    <property type="match status" value="1"/>
</dbReference>
<dbReference type="Gene3D" id="1.10.300.10">
    <property type="entry name" value="Adenylosuccinate Synthetase, subunit A, domain 2"/>
    <property type="match status" value="1"/>
</dbReference>
<dbReference type="Gene3D" id="3.90.170.10">
    <property type="entry name" value="Adenylosuccinate Synthetase, subunit A, domain 3"/>
    <property type="match status" value="1"/>
</dbReference>
<dbReference type="HAMAP" id="MF_00011">
    <property type="entry name" value="Adenylosucc_synth"/>
    <property type="match status" value="1"/>
</dbReference>
<dbReference type="InterPro" id="IPR018220">
    <property type="entry name" value="Adenylosuccin_syn_GTP-bd"/>
</dbReference>
<dbReference type="InterPro" id="IPR033128">
    <property type="entry name" value="Adenylosuccin_syn_Lys_AS"/>
</dbReference>
<dbReference type="InterPro" id="IPR042109">
    <property type="entry name" value="Adenylosuccinate_synth_dom1"/>
</dbReference>
<dbReference type="InterPro" id="IPR042110">
    <property type="entry name" value="Adenylosuccinate_synth_dom2"/>
</dbReference>
<dbReference type="InterPro" id="IPR042111">
    <property type="entry name" value="Adenylosuccinate_synth_dom3"/>
</dbReference>
<dbReference type="InterPro" id="IPR001114">
    <property type="entry name" value="Adenylosuccinate_synthetase"/>
</dbReference>
<dbReference type="InterPro" id="IPR027417">
    <property type="entry name" value="P-loop_NTPase"/>
</dbReference>
<dbReference type="NCBIfam" id="NF002223">
    <property type="entry name" value="PRK01117.1"/>
    <property type="match status" value="1"/>
</dbReference>
<dbReference type="NCBIfam" id="TIGR00184">
    <property type="entry name" value="purA"/>
    <property type="match status" value="1"/>
</dbReference>
<dbReference type="PANTHER" id="PTHR11846">
    <property type="entry name" value="ADENYLOSUCCINATE SYNTHETASE"/>
    <property type="match status" value="1"/>
</dbReference>
<dbReference type="PANTHER" id="PTHR11846:SF0">
    <property type="entry name" value="ADENYLOSUCCINATE SYNTHETASE"/>
    <property type="match status" value="1"/>
</dbReference>
<dbReference type="Pfam" id="PF00709">
    <property type="entry name" value="Adenylsucc_synt"/>
    <property type="match status" value="1"/>
</dbReference>
<dbReference type="SMART" id="SM00788">
    <property type="entry name" value="Adenylsucc_synt"/>
    <property type="match status" value="1"/>
</dbReference>
<dbReference type="SUPFAM" id="SSF52540">
    <property type="entry name" value="P-loop containing nucleoside triphosphate hydrolases"/>
    <property type="match status" value="1"/>
</dbReference>
<dbReference type="PROSITE" id="PS01266">
    <property type="entry name" value="ADENYLOSUCCIN_SYN_1"/>
    <property type="match status" value="1"/>
</dbReference>
<dbReference type="PROSITE" id="PS00513">
    <property type="entry name" value="ADENYLOSUCCIN_SYN_2"/>
    <property type="match status" value="1"/>
</dbReference>